<protein>
    <recommendedName>
        <fullName evidence="1">DNA-binding protein Fis</fullName>
    </recommendedName>
</protein>
<dbReference type="EMBL" id="CP000880">
    <property type="protein sequence ID" value="ABX24028.1"/>
    <property type="molecule type" value="Genomic_DNA"/>
</dbReference>
<dbReference type="SMR" id="A9MN98"/>
<dbReference type="STRING" id="41514.SARI_04245"/>
<dbReference type="KEGG" id="ses:SARI_04245"/>
<dbReference type="HOGENOM" id="CLU_158040_3_0_6"/>
<dbReference type="Proteomes" id="UP000002084">
    <property type="component" value="Chromosome"/>
</dbReference>
<dbReference type="GO" id="GO:0003700">
    <property type="term" value="F:DNA-binding transcription factor activity"/>
    <property type="evidence" value="ECO:0007669"/>
    <property type="project" value="UniProtKB-UniRule"/>
</dbReference>
<dbReference type="GO" id="GO:0043565">
    <property type="term" value="F:sequence-specific DNA binding"/>
    <property type="evidence" value="ECO:0007669"/>
    <property type="project" value="InterPro"/>
</dbReference>
<dbReference type="FunFam" id="1.10.10.60:FF:000006">
    <property type="entry name" value="DNA-binding protein Fis"/>
    <property type="match status" value="1"/>
</dbReference>
<dbReference type="Gene3D" id="1.10.10.60">
    <property type="entry name" value="Homeodomain-like"/>
    <property type="match status" value="1"/>
</dbReference>
<dbReference type="HAMAP" id="MF_00166">
    <property type="entry name" value="DNA_binding_Fis"/>
    <property type="match status" value="1"/>
</dbReference>
<dbReference type="InterPro" id="IPR005412">
    <property type="entry name" value="Fis_DNA-bd"/>
</dbReference>
<dbReference type="InterPro" id="IPR009057">
    <property type="entry name" value="Homeodomain-like_sf"/>
</dbReference>
<dbReference type="InterPro" id="IPR002197">
    <property type="entry name" value="HTH_Fis"/>
</dbReference>
<dbReference type="InterPro" id="IPR050207">
    <property type="entry name" value="Trans_regulatory_Fis"/>
</dbReference>
<dbReference type="NCBIfam" id="NF001659">
    <property type="entry name" value="PRK00430.1"/>
    <property type="match status" value="1"/>
</dbReference>
<dbReference type="PANTHER" id="PTHR47918">
    <property type="entry name" value="DNA-BINDING PROTEIN FIS"/>
    <property type="match status" value="1"/>
</dbReference>
<dbReference type="PANTHER" id="PTHR47918:SF1">
    <property type="entry name" value="DNA-BINDING PROTEIN FIS"/>
    <property type="match status" value="1"/>
</dbReference>
<dbReference type="Pfam" id="PF02954">
    <property type="entry name" value="HTH_8"/>
    <property type="match status" value="1"/>
</dbReference>
<dbReference type="PIRSF" id="PIRSF002097">
    <property type="entry name" value="DNA-binding_Fis"/>
    <property type="match status" value="1"/>
</dbReference>
<dbReference type="PRINTS" id="PR01591">
    <property type="entry name" value="DNABINDNGFIS"/>
</dbReference>
<dbReference type="PRINTS" id="PR01590">
    <property type="entry name" value="HTHFIS"/>
</dbReference>
<dbReference type="SUPFAM" id="SSF46689">
    <property type="entry name" value="Homeodomain-like"/>
    <property type="match status" value="1"/>
</dbReference>
<name>FIS_SALAR</name>
<evidence type="ECO:0000255" key="1">
    <source>
        <dbReference type="HAMAP-Rule" id="MF_00166"/>
    </source>
</evidence>
<organism>
    <name type="scientific">Salmonella arizonae (strain ATCC BAA-731 / CDC346-86 / RSK2980)</name>
    <dbReference type="NCBI Taxonomy" id="41514"/>
    <lineage>
        <taxon>Bacteria</taxon>
        <taxon>Pseudomonadati</taxon>
        <taxon>Pseudomonadota</taxon>
        <taxon>Gammaproteobacteria</taxon>
        <taxon>Enterobacterales</taxon>
        <taxon>Enterobacteriaceae</taxon>
        <taxon>Salmonella</taxon>
    </lineage>
</organism>
<reference key="1">
    <citation type="submission" date="2007-11" db="EMBL/GenBank/DDBJ databases">
        <authorList>
            <consortium name="The Salmonella enterica serovar Arizonae Genome Sequencing Project"/>
            <person name="McClelland M."/>
            <person name="Sanderson E.K."/>
            <person name="Porwollik S."/>
            <person name="Spieth J."/>
            <person name="Clifton W.S."/>
            <person name="Fulton R."/>
            <person name="Chunyan W."/>
            <person name="Wollam A."/>
            <person name="Shah N."/>
            <person name="Pepin K."/>
            <person name="Bhonagiri V."/>
            <person name="Nash W."/>
            <person name="Johnson M."/>
            <person name="Thiruvilangam P."/>
            <person name="Wilson R."/>
        </authorList>
    </citation>
    <scope>NUCLEOTIDE SEQUENCE [LARGE SCALE GENOMIC DNA]</scope>
    <source>
        <strain>ATCC BAA-731 / CDC346-86 / RSK2980</strain>
    </source>
</reference>
<sequence>MFEQRVNSDVLTVSTVNSQDQVTQKPLRDSVKQALKNYFAQLNGQDVNDLYELVLAEVEQPLLDMVMQYTRGNQTRAALMMGINRGTLRKKLKKYGMN</sequence>
<accession>A9MN98</accession>
<comment type="function">
    <text evidence="1">Activates ribosomal RNA transcription. Plays a direct role in upstream activation of rRNA promoters.</text>
</comment>
<comment type="subunit">
    <text evidence="1">Homodimer.</text>
</comment>
<comment type="similarity">
    <text evidence="1">Belongs to the transcriptional regulatory Fis family.</text>
</comment>
<feature type="chain" id="PRO_1000076982" description="DNA-binding protein Fis">
    <location>
        <begin position="1"/>
        <end position="98"/>
    </location>
</feature>
<feature type="DNA-binding region" description="H-T-H motif" evidence="1">
    <location>
        <begin position="74"/>
        <end position="93"/>
    </location>
</feature>
<gene>
    <name evidence="1" type="primary">fis</name>
    <name type="ordered locus">SARI_04245</name>
</gene>
<proteinExistence type="inferred from homology"/>
<keyword id="KW-0010">Activator</keyword>
<keyword id="KW-0238">DNA-binding</keyword>
<keyword id="KW-1185">Reference proteome</keyword>
<keyword id="KW-0804">Transcription</keyword>
<keyword id="KW-0805">Transcription regulation</keyword>